<sequence length="120" mass="13451">MQEIMLKSKIHMAKVTDKSINYMGSIGIDTELLEKAGMKPYELVLVADVNNGQRFVTYIIPEEKGSKKIVINGAAARLVEQGDRVIIMAFGMYDSNEYKGPKVIIMNEKNEIVEIKQEGV</sequence>
<evidence type="ECO:0000255" key="1">
    <source>
        <dbReference type="HAMAP-Rule" id="MF_00446"/>
    </source>
</evidence>
<dbReference type="EC" id="4.1.1.11" evidence="1"/>
<dbReference type="EMBL" id="CP001185">
    <property type="protein sequence ID" value="ACJ75064.1"/>
    <property type="molecule type" value="Genomic_DNA"/>
</dbReference>
<dbReference type="RefSeq" id="WP_004100547.1">
    <property type="nucleotide sequence ID" value="NC_011653.1"/>
</dbReference>
<dbReference type="SMR" id="B7IG50"/>
<dbReference type="STRING" id="484019.THA_577"/>
<dbReference type="KEGG" id="taf:THA_577"/>
<dbReference type="eggNOG" id="COG0853">
    <property type="taxonomic scope" value="Bacteria"/>
</dbReference>
<dbReference type="HOGENOM" id="CLU_115305_2_1_0"/>
<dbReference type="OrthoDB" id="9803983at2"/>
<dbReference type="UniPathway" id="UPA00028">
    <property type="reaction ID" value="UER00002"/>
</dbReference>
<dbReference type="Proteomes" id="UP000002453">
    <property type="component" value="Chromosome"/>
</dbReference>
<dbReference type="GO" id="GO:0005829">
    <property type="term" value="C:cytosol"/>
    <property type="evidence" value="ECO:0007669"/>
    <property type="project" value="TreeGrafter"/>
</dbReference>
<dbReference type="GO" id="GO:0004068">
    <property type="term" value="F:aspartate 1-decarboxylase activity"/>
    <property type="evidence" value="ECO:0007669"/>
    <property type="project" value="UniProtKB-UniRule"/>
</dbReference>
<dbReference type="GO" id="GO:0006523">
    <property type="term" value="P:alanine biosynthetic process"/>
    <property type="evidence" value="ECO:0007669"/>
    <property type="project" value="InterPro"/>
</dbReference>
<dbReference type="GO" id="GO:0015940">
    <property type="term" value="P:pantothenate biosynthetic process"/>
    <property type="evidence" value="ECO:0007669"/>
    <property type="project" value="UniProtKB-UniRule"/>
</dbReference>
<dbReference type="CDD" id="cd06919">
    <property type="entry name" value="Asp_decarbox"/>
    <property type="match status" value="1"/>
</dbReference>
<dbReference type="Gene3D" id="2.40.40.20">
    <property type="match status" value="1"/>
</dbReference>
<dbReference type="HAMAP" id="MF_00446">
    <property type="entry name" value="PanD"/>
    <property type="match status" value="1"/>
</dbReference>
<dbReference type="InterPro" id="IPR009010">
    <property type="entry name" value="Asp_de-COase-like_dom_sf"/>
</dbReference>
<dbReference type="InterPro" id="IPR003190">
    <property type="entry name" value="Asp_decarbox"/>
</dbReference>
<dbReference type="NCBIfam" id="TIGR00223">
    <property type="entry name" value="panD"/>
    <property type="match status" value="1"/>
</dbReference>
<dbReference type="PANTHER" id="PTHR21012">
    <property type="entry name" value="ASPARTATE 1-DECARBOXYLASE"/>
    <property type="match status" value="1"/>
</dbReference>
<dbReference type="PANTHER" id="PTHR21012:SF0">
    <property type="entry name" value="ASPARTATE 1-DECARBOXYLASE"/>
    <property type="match status" value="1"/>
</dbReference>
<dbReference type="Pfam" id="PF02261">
    <property type="entry name" value="Asp_decarbox"/>
    <property type="match status" value="1"/>
</dbReference>
<dbReference type="PIRSF" id="PIRSF006246">
    <property type="entry name" value="Asp_decarbox"/>
    <property type="match status" value="1"/>
</dbReference>
<dbReference type="SUPFAM" id="SSF50692">
    <property type="entry name" value="ADC-like"/>
    <property type="match status" value="1"/>
</dbReference>
<reference key="1">
    <citation type="journal article" date="2009" name="J. Bacteriol.">
        <title>The genome of Thermosipho africanus TCF52B: lateral genetic connections to the Firmicutes and Archaea.</title>
        <authorList>
            <person name="Nesboe C.L."/>
            <person name="Bapteste E."/>
            <person name="Curtis B."/>
            <person name="Dahle H."/>
            <person name="Lopez P."/>
            <person name="Macleod D."/>
            <person name="Dlutek M."/>
            <person name="Bowman S."/>
            <person name="Zhaxybayeva O."/>
            <person name="Birkeland N.-K."/>
            <person name="Doolittle W.F."/>
        </authorList>
    </citation>
    <scope>NUCLEOTIDE SEQUENCE [LARGE SCALE GENOMIC DNA]</scope>
    <source>
        <strain>TCF52B</strain>
    </source>
</reference>
<organism>
    <name type="scientific">Thermosipho africanus (strain TCF52B)</name>
    <dbReference type="NCBI Taxonomy" id="484019"/>
    <lineage>
        <taxon>Bacteria</taxon>
        <taxon>Thermotogati</taxon>
        <taxon>Thermotogota</taxon>
        <taxon>Thermotogae</taxon>
        <taxon>Thermotogales</taxon>
        <taxon>Fervidobacteriaceae</taxon>
        <taxon>Thermosipho</taxon>
    </lineage>
</organism>
<name>PAND_THEAB</name>
<gene>
    <name evidence="1" type="primary">panD</name>
    <name type="ordered locus">THA_577</name>
</gene>
<keyword id="KW-0068">Autocatalytic cleavage</keyword>
<keyword id="KW-0963">Cytoplasm</keyword>
<keyword id="KW-0210">Decarboxylase</keyword>
<keyword id="KW-0456">Lyase</keyword>
<keyword id="KW-0566">Pantothenate biosynthesis</keyword>
<keyword id="KW-0670">Pyruvate</keyword>
<keyword id="KW-1185">Reference proteome</keyword>
<keyword id="KW-0704">Schiff base</keyword>
<keyword id="KW-0865">Zymogen</keyword>
<protein>
    <recommendedName>
        <fullName evidence="1">Aspartate 1-decarboxylase</fullName>
        <ecNumber evidence="1">4.1.1.11</ecNumber>
    </recommendedName>
    <alternativeName>
        <fullName evidence="1">Aspartate alpha-decarboxylase</fullName>
    </alternativeName>
    <component>
        <recommendedName>
            <fullName evidence="1">Aspartate 1-decarboxylase beta chain</fullName>
        </recommendedName>
    </component>
    <component>
        <recommendedName>
            <fullName evidence="1">Aspartate 1-decarboxylase alpha chain</fullName>
        </recommendedName>
    </component>
</protein>
<comment type="function">
    <text evidence="1">Catalyzes the pyruvoyl-dependent decarboxylation of aspartate to produce beta-alanine.</text>
</comment>
<comment type="catalytic activity">
    <reaction evidence="1">
        <text>L-aspartate + H(+) = beta-alanine + CO2</text>
        <dbReference type="Rhea" id="RHEA:19497"/>
        <dbReference type="ChEBI" id="CHEBI:15378"/>
        <dbReference type="ChEBI" id="CHEBI:16526"/>
        <dbReference type="ChEBI" id="CHEBI:29991"/>
        <dbReference type="ChEBI" id="CHEBI:57966"/>
        <dbReference type="EC" id="4.1.1.11"/>
    </reaction>
</comment>
<comment type="cofactor">
    <cofactor evidence="1">
        <name>pyruvate</name>
        <dbReference type="ChEBI" id="CHEBI:15361"/>
    </cofactor>
    <text evidence="1">Binds 1 pyruvoyl group covalently per subunit.</text>
</comment>
<comment type="pathway">
    <text evidence="1">Cofactor biosynthesis; (R)-pantothenate biosynthesis; beta-alanine from L-aspartate: step 1/1.</text>
</comment>
<comment type="subunit">
    <text evidence="1">Heterooctamer of four alpha and four beta subunits.</text>
</comment>
<comment type="subcellular location">
    <subcellularLocation>
        <location evidence="1">Cytoplasm</location>
    </subcellularLocation>
</comment>
<comment type="PTM">
    <text evidence="1">Is synthesized initially as an inactive proenzyme, which is activated by self-cleavage at a specific serine bond to produce a beta-subunit with a hydroxyl group at its C-terminus and an alpha-subunit with a pyruvoyl group at its N-terminus.</text>
</comment>
<comment type="similarity">
    <text evidence="1">Belongs to the PanD family.</text>
</comment>
<feature type="chain" id="PRO_1000192053" description="Aspartate 1-decarboxylase beta chain" evidence="1">
    <location>
        <begin position="1"/>
        <end position="24"/>
    </location>
</feature>
<feature type="chain" id="PRO_1000192054" description="Aspartate 1-decarboxylase alpha chain" evidence="1">
    <location>
        <begin position="25"/>
        <end position="120"/>
    </location>
</feature>
<feature type="active site" description="Schiff-base intermediate with substrate; via pyruvic acid" evidence="1">
    <location>
        <position position="25"/>
    </location>
</feature>
<feature type="active site" description="Proton donor" evidence="1">
    <location>
        <position position="58"/>
    </location>
</feature>
<feature type="binding site" evidence="1">
    <location>
        <position position="57"/>
    </location>
    <ligand>
        <name>substrate</name>
    </ligand>
</feature>
<feature type="binding site" evidence="1">
    <location>
        <begin position="73"/>
        <end position="75"/>
    </location>
    <ligand>
        <name>substrate</name>
    </ligand>
</feature>
<feature type="modified residue" description="Pyruvic acid (Ser)" evidence="1">
    <location>
        <position position="25"/>
    </location>
</feature>
<accession>B7IG50</accession>
<proteinExistence type="inferred from homology"/>